<evidence type="ECO:0000255" key="1">
    <source>
        <dbReference type="HAMAP-Rule" id="MF_01596"/>
    </source>
</evidence>
<evidence type="ECO:0000305" key="2"/>
<comment type="function">
    <text evidence="1">PhoP-regulated transcription is redox-sensitive, being activated when the periplasm becomes more reducing. MgrB acts between DsbA/DsbB and PhoP/PhoQ in this pathway. Represses PhoP/PhoQ signaling, possibly by binding to the periplasmic domain of PhoQ, altering its activity and that of downstream effector PhoP.</text>
</comment>
<comment type="subunit">
    <text evidence="1">May form homooligomers. Probably interacts with the periplasmic domain of PhoQ.</text>
</comment>
<comment type="subcellular location">
    <subcellularLocation>
        <location evidence="1">Cell inner membrane</location>
        <topology evidence="1">Single-pass membrane protein</topology>
    </subcellularLocation>
</comment>
<comment type="similarity">
    <text evidence="1">Belongs to the MgrB family.</text>
</comment>
<comment type="sequence caution" evidence="2">
    <conflict type="erroneous initiation">
        <sequence resource="EMBL-CDS" id="CAQ88773"/>
    </conflict>
    <text>Extended N-terminus.</text>
</comment>
<keyword id="KW-0997">Cell inner membrane</keyword>
<keyword id="KW-1003">Cell membrane</keyword>
<keyword id="KW-0472">Membrane</keyword>
<keyword id="KW-0812">Transmembrane</keyword>
<keyword id="KW-1133">Transmembrane helix</keyword>
<protein>
    <recommendedName>
        <fullName evidence="1">PhoP/PhoQ regulator MgrB</fullName>
    </recommendedName>
</protein>
<sequence length="47" mass="5514">MKKFRWLVLIVVVLACLVLWAQVINIMCDQDVQFFSGICAINKFIPW</sequence>
<gene>
    <name evidence="1" type="primary">mgrB</name>
    <name type="ordered locus">EFER_1249</name>
</gene>
<dbReference type="EMBL" id="CU928158">
    <property type="protein sequence ID" value="CAQ88773.1"/>
    <property type="status" value="ALT_INIT"/>
    <property type="molecule type" value="Genomic_DNA"/>
</dbReference>
<dbReference type="RefSeq" id="WP_024256427.1">
    <property type="nucleotide sequence ID" value="NC_011740.1"/>
</dbReference>
<dbReference type="SMR" id="B7LPM0"/>
<dbReference type="GeneID" id="75057704"/>
<dbReference type="KEGG" id="efe:EFER_1249"/>
<dbReference type="HOGENOM" id="CLU_208030_1_0_6"/>
<dbReference type="Proteomes" id="UP000000745">
    <property type="component" value="Chromosome"/>
</dbReference>
<dbReference type="GO" id="GO:0005886">
    <property type="term" value="C:plasma membrane"/>
    <property type="evidence" value="ECO:0007669"/>
    <property type="project" value="UniProtKB-SubCell"/>
</dbReference>
<dbReference type="GO" id="GO:0070298">
    <property type="term" value="P:negative regulation of phosphorelay signal transduction system"/>
    <property type="evidence" value="ECO:0007669"/>
    <property type="project" value="UniProtKB-UniRule"/>
</dbReference>
<dbReference type="HAMAP" id="MF_01596">
    <property type="entry name" value="MgrB"/>
    <property type="match status" value="1"/>
</dbReference>
<dbReference type="InterPro" id="IPR020907">
    <property type="entry name" value="MgrB"/>
</dbReference>
<dbReference type="NCBIfam" id="NF007635">
    <property type="entry name" value="PRK10299.1"/>
    <property type="match status" value="1"/>
</dbReference>
<dbReference type="Pfam" id="PF13998">
    <property type="entry name" value="MgrB"/>
    <property type="match status" value="1"/>
</dbReference>
<dbReference type="PROSITE" id="PS51257">
    <property type="entry name" value="PROKAR_LIPOPROTEIN"/>
    <property type="match status" value="1"/>
</dbReference>
<reference key="1">
    <citation type="journal article" date="2009" name="PLoS Genet.">
        <title>Organised genome dynamics in the Escherichia coli species results in highly diverse adaptive paths.</title>
        <authorList>
            <person name="Touchon M."/>
            <person name="Hoede C."/>
            <person name="Tenaillon O."/>
            <person name="Barbe V."/>
            <person name="Baeriswyl S."/>
            <person name="Bidet P."/>
            <person name="Bingen E."/>
            <person name="Bonacorsi S."/>
            <person name="Bouchier C."/>
            <person name="Bouvet O."/>
            <person name="Calteau A."/>
            <person name="Chiapello H."/>
            <person name="Clermont O."/>
            <person name="Cruveiller S."/>
            <person name="Danchin A."/>
            <person name="Diard M."/>
            <person name="Dossat C."/>
            <person name="Karoui M.E."/>
            <person name="Frapy E."/>
            <person name="Garry L."/>
            <person name="Ghigo J.M."/>
            <person name="Gilles A.M."/>
            <person name="Johnson J."/>
            <person name="Le Bouguenec C."/>
            <person name="Lescat M."/>
            <person name="Mangenot S."/>
            <person name="Martinez-Jehanne V."/>
            <person name="Matic I."/>
            <person name="Nassif X."/>
            <person name="Oztas S."/>
            <person name="Petit M.A."/>
            <person name="Pichon C."/>
            <person name="Rouy Z."/>
            <person name="Ruf C.S."/>
            <person name="Schneider D."/>
            <person name="Tourret J."/>
            <person name="Vacherie B."/>
            <person name="Vallenet D."/>
            <person name="Medigue C."/>
            <person name="Rocha E.P.C."/>
            <person name="Denamur E."/>
        </authorList>
    </citation>
    <scope>NUCLEOTIDE SEQUENCE [LARGE SCALE GENOMIC DNA]</scope>
    <source>
        <strain>ATCC 35469 / DSM 13698 / BCRC 15582 / CCUG 18766 / IAM 14443 / JCM 21226 / LMG 7866 / NBRC 102419 / NCTC 12128 / CDC 0568-73</strain>
    </source>
</reference>
<name>MGRB_ESCF3</name>
<proteinExistence type="inferred from homology"/>
<organism>
    <name type="scientific">Escherichia fergusonii (strain ATCC 35469 / DSM 13698 / CCUG 18766 / IAM 14443 / JCM 21226 / LMG 7866 / NBRC 102419 / NCTC 12128 / CDC 0568-73)</name>
    <dbReference type="NCBI Taxonomy" id="585054"/>
    <lineage>
        <taxon>Bacteria</taxon>
        <taxon>Pseudomonadati</taxon>
        <taxon>Pseudomonadota</taxon>
        <taxon>Gammaproteobacteria</taxon>
        <taxon>Enterobacterales</taxon>
        <taxon>Enterobacteriaceae</taxon>
        <taxon>Escherichia</taxon>
    </lineage>
</organism>
<accession>B7LPM0</accession>
<feature type="chain" id="PRO_0000381764" description="PhoP/PhoQ regulator MgrB">
    <location>
        <begin position="1"/>
        <end position="47"/>
    </location>
</feature>
<feature type="transmembrane region" description="Helical" evidence="1">
    <location>
        <begin position="6"/>
        <end position="26"/>
    </location>
</feature>